<gene>
    <name type="primary">Rpl29</name>
    <name type="synonym">Rpl43</name>
</gene>
<sequence length="160" mass="17587">MAKSKNHTTHNQSRKWHRNGIKKPRSQRYESLKGVDPKFLRNMRFAKKHNKKGLKKMQANNAKAVSARAEAIKALVKPQAIKPKMPKGPKLKRLAFIAHPKLGKRIRSYMAKGQRLCQPKPKVQTKAGAKAPAKAQASAPAQAPKGAQAPKGAQAPVKAP</sequence>
<comment type="function">
    <text evidence="3">Component of the large ribosomal subunit (PubMed:36517592). The ribosome is a large ribonucleoprotein complex responsible for the synthesis of proteins in the cell (PubMed:36517592).</text>
</comment>
<comment type="subunit">
    <text evidence="3">Component of the large ribosomal subunit.</text>
</comment>
<comment type="subcellular location">
    <subcellularLocation>
        <location evidence="3">Cytoplasm</location>
    </subcellularLocation>
</comment>
<comment type="similarity">
    <text evidence="4">Belongs to the eukaryotic ribosomal protein eL29 family.</text>
</comment>
<accession>P47915</accession>
<organism>
    <name type="scientific">Mus musculus</name>
    <name type="common">Mouse</name>
    <dbReference type="NCBI Taxonomy" id="10090"/>
    <lineage>
        <taxon>Eukaryota</taxon>
        <taxon>Metazoa</taxon>
        <taxon>Chordata</taxon>
        <taxon>Craniata</taxon>
        <taxon>Vertebrata</taxon>
        <taxon>Euteleostomi</taxon>
        <taxon>Mammalia</taxon>
        <taxon>Eutheria</taxon>
        <taxon>Euarchontoglires</taxon>
        <taxon>Glires</taxon>
        <taxon>Rodentia</taxon>
        <taxon>Myomorpha</taxon>
        <taxon>Muroidea</taxon>
        <taxon>Muridae</taxon>
        <taxon>Murinae</taxon>
        <taxon>Mus</taxon>
        <taxon>Mus</taxon>
    </lineage>
</organism>
<dbReference type="EMBL" id="L08651">
    <property type="protein sequence ID" value="AAA16857.1"/>
    <property type="molecule type" value="mRNA"/>
</dbReference>
<dbReference type="EMBL" id="BC002062">
    <property type="protein sequence ID" value="AAH02062.1"/>
    <property type="molecule type" value="mRNA"/>
</dbReference>
<dbReference type="EMBL" id="BC081467">
    <property type="protein sequence ID" value="AAH81467.1"/>
    <property type="molecule type" value="mRNA"/>
</dbReference>
<dbReference type="EMBL" id="BC082292">
    <property type="protein sequence ID" value="AAH82292.1"/>
    <property type="molecule type" value="mRNA"/>
</dbReference>
<dbReference type="EMBL" id="BC086897">
    <property type="protein sequence ID" value="AAH86897.1"/>
    <property type="molecule type" value="mRNA"/>
</dbReference>
<dbReference type="EMBL" id="BC086898">
    <property type="protein sequence ID" value="AAH86898.1"/>
    <property type="molecule type" value="mRNA"/>
</dbReference>
<dbReference type="CCDS" id="CCDS23476.1"/>
<dbReference type="PIR" id="JC2012">
    <property type="entry name" value="JC2012"/>
</dbReference>
<dbReference type="RefSeq" id="NP_001311462.1">
    <property type="nucleotide sequence ID" value="NM_001324533.2"/>
</dbReference>
<dbReference type="RefSeq" id="NP_001311463.1">
    <property type="nucleotide sequence ID" value="NM_001324534.2"/>
</dbReference>
<dbReference type="RefSeq" id="NP_033108.1">
    <property type="nucleotide sequence ID" value="NM_009082.4"/>
</dbReference>
<dbReference type="RefSeq" id="XP_006511723.1">
    <property type="nucleotide sequence ID" value="XM_006511660.5"/>
</dbReference>
<dbReference type="RefSeq" id="XP_990228.1">
    <property type="nucleotide sequence ID" value="XM_985134.6"/>
</dbReference>
<dbReference type="PDB" id="6SWA">
    <property type="method" value="EM"/>
    <property type="resolution" value="3.10 A"/>
    <property type="chains" value="Z=1-160"/>
</dbReference>
<dbReference type="PDB" id="7CPU">
    <property type="method" value="EM"/>
    <property type="resolution" value="2.82 A"/>
    <property type="chains" value="Lb=1-160"/>
</dbReference>
<dbReference type="PDB" id="7CPV">
    <property type="method" value="EM"/>
    <property type="resolution" value="3.03 A"/>
    <property type="chains" value="Lb=1-160"/>
</dbReference>
<dbReference type="PDB" id="7LS1">
    <property type="method" value="EM"/>
    <property type="resolution" value="3.30 A"/>
    <property type="chains" value="V2=1-160"/>
</dbReference>
<dbReference type="PDB" id="7LS2">
    <property type="method" value="EM"/>
    <property type="resolution" value="3.10 A"/>
    <property type="chains" value="V2=1-160"/>
</dbReference>
<dbReference type="PDBsum" id="6SWA"/>
<dbReference type="PDBsum" id="7CPU"/>
<dbReference type="PDBsum" id="7CPV"/>
<dbReference type="PDBsum" id="7LS1"/>
<dbReference type="PDBsum" id="7LS2"/>
<dbReference type="EMDB" id="EMD-10321"/>
<dbReference type="EMDB" id="EMD-23501"/>
<dbReference type="EMDB" id="EMD-30432"/>
<dbReference type="EMDB" id="EMD-30433"/>
<dbReference type="SMR" id="P47915"/>
<dbReference type="BioGRID" id="202976">
    <property type="interactions" value="28"/>
</dbReference>
<dbReference type="BioGRID" id="578473">
    <property type="interactions" value="3"/>
</dbReference>
<dbReference type="ComplexPortal" id="CPX-5262">
    <property type="entry name" value="60S cytosolic large ribosomal subunit"/>
</dbReference>
<dbReference type="ComplexPortal" id="CPX-7662">
    <property type="entry name" value="60S cytosolic large ribosomal subunit, testis-specific variant"/>
</dbReference>
<dbReference type="ComplexPortal" id="CPX-7663">
    <property type="entry name" value="60S cytosolic large ribosomal subunit, striated muscle variant"/>
</dbReference>
<dbReference type="FunCoup" id="P47915">
    <property type="interactions" value="395"/>
</dbReference>
<dbReference type="IntAct" id="P47915">
    <property type="interactions" value="2"/>
</dbReference>
<dbReference type="STRING" id="10090.ENSMUSP00000117834"/>
<dbReference type="GlyGen" id="P47915">
    <property type="glycosylation" value="3 sites, 2 N-linked glycans (2 sites), 1 O-linked glycan (1 site)"/>
</dbReference>
<dbReference type="iPTMnet" id="P47915"/>
<dbReference type="PhosphoSitePlus" id="P47915"/>
<dbReference type="SwissPalm" id="P47915"/>
<dbReference type="jPOST" id="P47915"/>
<dbReference type="PaxDb" id="10090-ENSMUSP00000080203"/>
<dbReference type="PeptideAtlas" id="P47915"/>
<dbReference type="ProteomicsDB" id="253250"/>
<dbReference type="Pumba" id="P47915"/>
<dbReference type="DNASU" id="19944"/>
<dbReference type="Ensembl" id="ENSMUST00000059802.7">
    <property type="protein sequence ID" value="ENSMUSP00000080203.6"/>
    <property type="gene ID" value="ENSMUSG00000048758.15"/>
</dbReference>
<dbReference type="Ensembl" id="ENSMUST00000098994.7">
    <property type="protein sequence ID" value="ENSMUSP00000096592.7"/>
    <property type="gene ID" value="ENSMUSG00000048758.15"/>
</dbReference>
<dbReference type="Ensembl" id="ENSMUST00000150576.8">
    <property type="protein sequence ID" value="ENSMUSP00000117834.2"/>
    <property type="gene ID" value="ENSMUSG00000048758.15"/>
</dbReference>
<dbReference type="GeneID" id="19944"/>
<dbReference type="KEGG" id="mmu:19944"/>
<dbReference type="UCSC" id="uc007avm.2">
    <property type="organism name" value="mouse"/>
</dbReference>
<dbReference type="AGR" id="MGI:99687"/>
<dbReference type="CTD" id="6159"/>
<dbReference type="MGI" id="MGI:99687">
    <property type="gene designation" value="Rpl29"/>
</dbReference>
<dbReference type="VEuPathDB" id="HostDB:ENSMUSG00000048758"/>
<dbReference type="eggNOG" id="KOG3504">
    <property type="taxonomic scope" value="Eukaryota"/>
</dbReference>
<dbReference type="GeneTree" id="ENSGT00390000007084"/>
<dbReference type="HOGENOM" id="CLU_139508_0_0_1"/>
<dbReference type="InParanoid" id="P47915"/>
<dbReference type="OMA" id="KHIRAHV"/>
<dbReference type="OrthoDB" id="996720at2759"/>
<dbReference type="PhylomeDB" id="P47915"/>
<dbReference type="TreeFam" id="TF313858"/>
<dbReference type="Reactome" id="R-MMU-156827">
    <property type="pathway name" value="L13a-mediated translational silencing of Ceruloplasmin expression"/>
</dbReference>
<dbReference type="Reactome" id="R-MMU-1799339">
    <property type="pathway name" value="SRP-dependent cotranslational protein targeting to membrane"/>
</dbReference>
<dbReference type="Reactome" id="R-MMU-6791226">
    <property type="pathway name" value="Major pathway of rRNA processing in the nucleolus and cytosol"/>
</dbReference>
<dbReference type="Reactome" id="R-MMU-72689">
    <property type="pathway name" value="Formation of a pool of free 40S subunits"/>
</dbReference>
<dbReference type="Reactome" id="R-MMU-72706">
    <property type="pathway name" value="GTP hydrolysis and joining of the 60S ribosomal subunit"/>
</dbReference>
<dbReference type="Reactome" id="R-MMU-975956">
    <property type="pathway name" value="Nonsense Mediated Decay (NMD) independent of the Exon Junction Complex (EJC)"/>
</dbReference>
<dbReference type="Reactome" id="R-MMU-975957">
    <property type="pathway name" value="Nonsense Mediated Decay (NMD) enhanced by the Exon Junction Complex (EJC)"/>
</dbReference>
<dbReference type="BioGRID-ORCS" id="19944">
    <property type="hits" value="15 hits in 108 CRISPR screens"/>
</dbReference>
<dbReference type="CD-CODE" id="CE726F99">
    <property type="entry name" value="Postsynaptic density"/>
</dbReference>
<dbReference type="ChiTaRS" id="Rpl29">
    <property type="organism name" value="mouse"/>
</dbReference>
<dbReference type="PRO" id="PR:P47915"/>
<dbReference type="Proteomes" id="UP000000589">
    <property type="component" value="Chromosome 9"/>
</dbReference>
<dbReference type="RNAct" id="P47915">
    <property type="molecule type" value="protein"/>
</dbReference>
<dbReference type="Bgee" id="ENSMUSG00000048758">
    <property type="expression patterns" value="Expressed in urinary bladder and 65 other cell types or tissues"/>
</dbReference>
<dbReference type="ExpressionAtlas" id="P47915">
    <property type="expression patterns" value="baseline and differential"/>
</dbReference>
<dbReference type="GO" id="GO:0005737">
    <property type="term" value="C:cytoplasm"/>
    <property type="evidence" value="ECO:0000314"/>
    <property type="project" value="ComplexPortal"/>
</dbReference>
<dbReference type="GO" id="GO:0005829">
    <property type="term" value="C:cytosol"/>
    <property type="evidence" value="ECO:0000304"/>
    <property type="project" value="Reactome"/>
</dbReference>
<dbReference type="GO" id="GO:0022625">
    <property type="term" value="C:cytosolic large ribosomal subunit"/>
    <property type="evidence" value="ECO:0000314"/>
    <property type="project" value="UniProtKB"/>
</dbReference>
<dbReference type="GO" id="GO:0022626">
    <property type="term" value="C:cytosolic ribosome"/>
    <property type="evidence" value="ECO:0000314"/>
    <property type="project" value="MGI"/>
</dbReference>
<dbReference type="GO" id="GO:0016020">
    <property type="term" value="C:membrane"/>
    <property type="evidence" value="ECO:0000314"/>
    <property type="project" value="MGI"/>
</dbReference>
<dbReference type="GO" id="GO:0098794">
    <property type="term" value="C:postsynapse"/>
    <property type="evidence" value="ECO:0000303"/>
    <property type="project" value="SynGO"/>
</dbReference>
<dbReference type="GO" id="GO:0098793">
    <property type="term" value="C:presynapse"/>
    <property type="evidence" value="ECO:0000303"/>
    <property type="project" value="SynGO"/>
</dbReference>
<dbReference type="GO" id="GO:0005840">
    <property type="term" value="C:ribosome"/>
    <property type="evidence" value="ECO:0000314"/>
    <property type="project" value="MGI"/>
</dbReference>
<dbReference type="GO" id="GO:0045202">
    <property type="term" value="C:synapse"/>
    <property type="evidence" value="ECO:0000314"/>
    <property type="project" value="SynGO"/>
</dbReference>
<dbReference type="GO" id="GO:0008201">
    <property type="term" value="F:heparin binding"/>
    <property type="evidence" value="ECO:0000314"/>
    <property type="project" value="MGI"/>
</dbReference>
<dbReference type="GO" id="GO:0003735">
    <property type="term" value="F:structural constituent of ribosome"/>
    <property type="evidence" value="ECO:0000314"/>
    <property type="project" value="UniProtKB"/>
</dbReference>
<dbReference type="GO" id="GO:0031589">
    <property type="term" value="P:cell-substrate adhesion"/>
    <property type="evidence" value="ECO:0000314"/>
    <property type="project" value="MGI"/>
</dbReference>
<dbReference type="GO" id="GO:0002181">
    <property type="term" value="P:cytoplasmic translation"/>
    <property type="evidence" value="ECO:0000303"/>
    <property type="project" value="ComplexPortal"/>
</dbReference>
<dbReference type="GO" id="GO:0048144">
    <property type="term" value="P:fibroblast proliferation"/>
    <property type="evidence" value="ECO:0000315"/>
    <property type="project" value="MGI"/>
</dbReference>
<dbReference type="GO" id="GO:0035264">
    <property type="term" value="P:multicellular organism growth"/>
    <property type="evidence" value="ECO:0000315"/>
    <property type="project" value="MGI"/>
</dbReference>
<dbReference type="GO" id="GO:0006412">
    <property type="term" value="P:translation"/>
    <property type="evidence" value="ECO:0000315"/>
    <property type="project" value="MGI"/>
</dbReference>
<dbReference type="GO" id="GO:0140242">
    <property type="term" value="P:translation at postsynapse"/>
    <property type="evidence" value="ECO:0000303"/>
    <property type="project" value="SynGO"/>
</dbReference>
<dbReference type="GO" id="GO:0140236">
    <property type="term" value="P:translation at presynapse"/>
    <property type="evidence" value="ECO:0000303"/>
    <property type="project" value="SynGO"/>
</dbReference>
<dbReference type="Gene3D" id="6.10.140.1730">
    <property type="match status" value="1"/>
</dbReference>
<dbReference type="InterPro" id="IPR002673">
    <property type="entry name" value="Ribosomal_eL29"/>
</dbReference>
<dbReference type="PANTHER" id="PTHR12884">
    <property type="entry name" value="60S RIBOSOMAL PROTEIN L29"/>
    <property type="match status" value="1"/>
</dbReference>
<dbReference type="PANTHER" id="PTHR12884:SF18">
    <property type="entry name" value="60S RIBOSOMAL PROTEIN L29"/>
    <property type="match status" value="1"/>
</dbReference>
<dbReference type="Pfam" id="PF01779">
    <property type="entry name" value="Ribosomal_L29e"/>
    <property type="match status" value="1"/>
</dbReference>
<name>RL29_MOUSE</name>
<keyword id="KW-0002">3D-structure</keyword>
<keyword id="KW-0007">Acetylation</keyword>
<keyword id="KW-0963">Cytoplasm</keyword>
<keyword id="KW-0488">Methylation</keyword>
<keyword id="KW-0597">Phosphoprotein</keyword>
<keyword id="KW-1185">Reference proteome</keyword>
<keyword id="KW-0677">Repeat</keyword>
<keyword id="KW-0687">Ribonucleoprotein</keyword>
<keyword id="KW-0689">Ribosomal protein</keyword>
<proteinExistence type="evidence at protein level"/>
<feature type="chain" id="PRO_0000219136" description="Large ribosomal subunit protein eL29">
    <location>
        <begin position="1"/>
        <end position="160"/>
    </location>
</feature>
<feature type="repeat" description="1">
    <location>
        <begin position="127"/>
        <end position="134"/>
    </location>
</feature>
<feature type="repeat" description="2">
    <location>
        <begin position="135"/>
        <end position="142"/>
    </location>
</feature>
<feature type="region of interest" description="Disordered" evidence="2">
    <location>
        <begin position="1"/>
        <end position="34"/>
    </location>
</feature>
<feature type="region of interest" description="Disordered" evidence="2">
    <location>
        <begin position="115"/>
        <end position="160"/>
    </location>
</feature>
<feature type="region of interest" description="2 X 8 AA tandem repeats of A-X-A-K-A-P-A-[KQ]">
    <location>
        <begin position="127"/>
        <end position="142"/>
    </location>
</feature>
<feature type="compositionally biased region" description="Basic residues" evidence="2">
    <location>
        <begin position="1"/>
        <end position="26"/>
    </location>
</feature>
<feature type="compositionally biased region" description="Low complexity" evidence="2">
    <location>
        <begin position="126"/>
        <end position="160"/>
    </location>
</feature>
<feature type="modified residue" description="N6-methyllysine" evidence="1">
    <location>
        <position position="5"/>
    </location>
</feature>
<feature type="modified residue" description="Phosphoserine" evidence="1">
    <location>
        <position position="31"/>
    </location>
</feature>
<feature type="modified residue" description="N6-acetyllysine" evidence="1">
    <location>
        <position position="33"/>
    </location>
</feature>
<feature type="modified residue" description="Phosphoserine" evidence="1">
    <location>
        <position position="138"/>
    </location>
</feature>
<feature type="modified residue" description="N6-acetyllysine" evidence="7">
    <location>
        <position position="145"/>
    </location>
</feature>
<evidence type="ECO:0000250" key="1">
    <source>
        <dbReference type="UniProtKB" id="P47914"/>
    </source>
</evidence>
<evidence type="ECO:0000256" key="2">
    <source>
        <dbReference type="SAM" id="MobiDB-lite"/>
    </source>
</evidence>
<evidence type="ECO:0000269" key="3">
    <source>
    </source>
</evidence>
<evidence type="ECO:0000305" key="4"/>
<evidence type="ECO:0007744" key="5">
    <source>
        <dbReference type="PDB" id="7CPU"/>
    </source>
</evidence>
<evidence type="ECO:0007744" key="6">
    <source>
        <dbReference type="PDB" id="7CPV"/>
    </source>
</evidence>
<evidence type="ECO:0007744" key="7">
    <source>
    </source>
</evidence>
<protein>
    <recommendedName>
        <fullName evidence="4">Large ribosomal subunit protein eL29</fullName>
    </recommendedName>
    <alternativeName>
        <fullName>60S ribosomal protein L29</fullName>
    </alternativeName>
</protein>
<reference key="1">
    <citation type="journal article" date="1993" name="Gene">
        <title>Cloning a pseudogene and cDNA encoding a 17-kDa ribosomal protein from mouse: structure and regulation of expression.</title>
        <authorList>
            <person name="Rudert F."/>
            <person name="Garnier J.-M."/>
            <person name="Schuhbaur B."/>
        </authorList>
    </citation>
    <scope>NUCLEOTIDE SEQUENCE [MRNA]</scope>
</reference>
<reference key="2">
    <citation type="journal article" date="2004" name="Genome Res.">
        <title>The status, quality, and expansion of the NIH full-length cDNA project: the Mammalian Gene Collection (MGC).</title>
        <authorList>
            <consortium name="The MGC Project Team"/>
        </authorList>
    </citation>
    <scope>NUCLEOTIDE SEQUENCE [LARGE SCALE MRNA]</scope>
    <source>
        <strain>C57BL/6J</strain>
        <strain>Czech II</strain>
        <strain>FVB/N-3</strain>
        <tissue>Brain</tissue>
        <tissue>Kidney</tissue>
        <tissue>Mammary gland</tissue>
    </source>
</reference>
<reference key="3">
    <citation type="journal article" date="2013" name="Mol. Cell">
        <title>SIRT5-mediated lysine desuccinylation impacts diverse metabolic pathways.</title>
        <authorList>
            <person name="Park J."/>
            <person name="Chen Y."/>
            <person name="Tishkoff D.X."/>
            <person name="Peng C."/>
            <person name="Tan M."/>
            <person name="Dai L."/>
            <person name="Xie Z."/>
            <person name="Zhang Y."/>
            <person name="Zwaans B.M."/>
            <person name="Skinner M.E."/>
            <person name="Lombard D.B."/>
            <person name="Zhao Y."/>
        </authorList>
    </citation>
    <scope>ACETYLATION [LARGE SCALE ANALYSIS] AT LYS-145</scope>
    <scope>IDENTIFICATION BY MASS SPECTROMETRY [LARGE SCALE ANALYSIS]</scope>
    <source>
        <tissue>Embryonic fibroblast</tissue>
    </source>
</reference>
<reference evidence="5 6" key="4">
    <citation type="journal article" date="2022" name="Nature">
        <title>A male germ-cell-specific ribosome controls male fertility.</title>
        <authorList>
            <person name="Li H."/>
            <person name="Huo Y."/>
            <person name="He X."/>
            <person name="Yao L."/>
            <person name="Zhang H."/>
            <person name="Cui Y."/>
            <person name="Xiao H."/>
            <person name="Xie W."/>
            <person name="Zhang D."/>
            <person name="Wang Y."/>
            <person name="Zhang S."/>
            <person name="Tu H."/>
            <person name="Cheng Y."/>
            <person name="Guo Y."/>
            <person name="Cao X."/>
            <person name="Zhu Y."/>
            <person name="Jiang T."/>
            <person name="Guo X."/>
            <person name="Qin Y."/>
            <person name="Sha J."/>
        </authorList>
    </citation>
    <scope>STRUCTURE BY ELECTRON MICROSCOPY (3.03 ANGSTROMS) OF RIBOSOME</scope>
    <scope>FUNCTION</scope>
    <scope>SUBUNIT</scope>
    <scope>SUBCELLULAR LOCATION</scope>
</reference>